<comment type="function">
    <text evidence="1">Binds directly to 16S ribosomal RNA.</text>
</comment>
<comment type="similarity">
    <text evidence="1">Belongs to the bacterial ribosomal protein bS20 family.</text>
</comment>
<organism>
    <name type="scientific">Baumannia cicadellinicola subsp. Homalodisca coagulata</name>
    <dbReference type="NCBI Taxonomy" id="374463"/>
    <lineage>
        <taxon>Bacteria</taxon>
        <taxon>Pseudomonadati</taxon>
        <taxon>Pseudomonadota</taxon>
        <taxon>Gammaproteobacteria</taxon>
        <taxon>Candidatus Palibaumannia</taxon>
    </lineage>
</organism>
<protein>
    <recommendedName>
        <fullName evidence="1">Small ribosomal subunit protein bS20</fullName>
    </recommendedName>
    <alternativeName>
        <fullName evidence="3">30S ribosomal protein S20</fullName>
    </alternativeName>
</protein>
<dbReference type="EMBL" id="CP000238">
    <property type="protein sequence ID" value="ABF14029.1"/>
    <property type="molecule type" value="Genomic_DNA"/>
</dbReference>
<dbReference type="RefSeq" id="WP_011520716.1">
    <property type="nucleotide sequence ID" value="NC_007984.1"/>
</dbReference>
<dbReference type="SMR" id="Q1LST1"/>
<dbReference type="STRING" id="374463.BCI_0554"/>
<dbReference type="KEGG" id="bci:BCI_0554"/>
<dbReference type="HOGENOM" id="CLU_160655_4_0_6"/>
<dbReference type="OrthoDB" id="9807974at2"/>
<dbReference type="Proteomes" id="UP000002427">
    <property type="component" value="Chromosome"/>
</dbReference>
<dbReference type="GO" id="GO:0005829">
    <property type="term" value="C:cytosol"/>
    <property type="evidence" value="ECO:0007669"/>
    <property type="project" value="TreeGrafter"/>
</dbReference>
<dbReference type="GO" id="GO:0015935">
    <property type="term" value="C:small ribosomal subunit"/>
    <property type="evidence" value="ECO:0007669"/>
    <property type="project" value="TreeGrafter"/>
</dbReference>
<dbReference type="GO" id="GO:0070181">
    <property type="term" value="F:small ribosomal subunit rRNA binding"/>
    <property type="evidence" value="ECO:0007669"/>
    <property type="project" value="TreeGrafter"/>
</dbReference>
<dbReference type="GO" id="GO:0003735">
    <property type="term" value="F:structural constituent of ribosome"/>
    <property type="evidence" value="ECO:0007669"/>
    <property type="project" value="InterPro"/>
</dbReference>
<dbReference type="GO" id="GO:0006412">
    <property type="term" value="P:translation"/>
    <property type="evidence" value="ECO:0007669"/>
    <property type="project" value="UniProtKB-UniRule"/>
</dbReference>
<dbReference type="FunFam" id="1.20.58.110:FF:000001">
    <property type="entry name" value="30S ribosomal protein S20"/>
    <property type="match status" value="1"/>
</dbReference>
<dbReference type="Gene3D" id="1.20.58.110">
    <property type="entry name" value="Ribosomal protein S20"/>
    <property type="match status" value="1"/>
</dbReference>
<dbReference type="HAMAP" id="MF_00500">
    <property type="entry name" value="Ribosomal_bS20"/>
    <property type="match status" value="1"/>
</dbReference>
<dbReference type="InterPro" id="IPR002583">
    <property type="entry name" value="Ribosomal_bS20"/>
</dbReference>
<dbReference type="InterPro" id="IPR036510">
    <property type="entry name" value="Ribosomal_bS20_sf"/>
</dbReference>
<dbReference type="NCBIfam" id="TIGR00029">
    <property type="entry name" value="S20"/>
    <property type="match status" value="1"/>
</dbReference>
<dbReference type="PANTHER" id="PTHR33398">
    <property type="entry name" value="30S RIBOSOMAL PROTEIN S20"/>
    <property type="match status" value="1"/>
</dbReference>
<dbReference type="PANTHER" id="PTHR33398:SF1">
    <property type="entry name" value="SMALL RIBOSOMAL SUBUNIT PROTEIN BS20C"/>
    <property type="match status" value="1"/>
</dbReference>
<dbReference type="Pfam" id="PF01649">
    <property type="entry name" value="Ribosomal_S20p"/>
    <property type="match status" value="1"/>
</dbReference>
<dbReference type="SUPFAM" id="SSF46992">
    <property type="entry name" value="Ribosomal protein S20"/>
    <property type="match status" value="1"/>
</dbReference>
<feature type="chain" id="PRO_0000260106" description="Small ribosomal subunit protein bS20">
    <location>
        <begin position="1"/>
        <end position="87"/>
    </location>
</feature>
<feature type="region of interest" description="Disordered" evidence="2">
    <location>
        <begin position="1"/>
        <end position="25"/>
    </location>
</feature>
<gene>
    <name evidence="1" type="primary">rpsT</name>
    <name type="ordered locus">BCI_0554</name>
</gene>
<name>RS20_BAUCH</name>
<proteinExistence type="inferred from homology"/>
<sequence>MANIKSAKKRAVQSEKHRLHNASRRSMVRTFVRKVYNAILTQDKKAAQQAFSAMQPIVDRQASKGLIHKNKAARYKSHLITQINKMH</sequence>
<evidence type="ECO:0000255" key="1">
    <source>
        <dbReference type="HAMAP-Rule" id="MF_00500"/>
    </source>
</evidence>
<evidence type="ECO:0000256" key="2">
    <source>
        <dbReference type="SAM" id="MobiDB-lite"/>
    </source>
</evidence>
<evidence type="ECO:0000305" key="3"/>
<keyword id="KW-1185">Reference proteome</keyword>
<keyword id="KW-0687">Ribonucleoprotein</keyword>
<keyword id="KW-0689">Ribosomal protein</keyword>
<keyword id="KW-0694">RNA-binding</keyword>
<keyword id="KW-0699">rRNA-binding</keyword>
<reference key="1">
    <citation type="journal article" date="2006" name="PLoS Biol.">
        <title>Metabolic complementarity and genomics of the dual bacterial symbiosis of sharpshooters.</title>
        <authorList>
            <person name="Wu D."/>
            <person name="Daugherty S.C."/>
            <person name="Van Aken S.E."/>
            <person name="Pai G.H."/>
            <person name="Watkins K.L."/>
            <person name="Khouri H."/>
            <person name="Tallon L.J."/>
            <person name="Zaborsky J.M."/>
            <person name="Dunbar H.E."/>
            <person name="Tran P.L."/>
            <person name="Moran N.A."/>
            <person name="Eisen J.A."/>
        </authorList>
    </citation>
    <scope>NUCLEOTIDE SEQUENCE [LARGE SCALE GENOMIC DNA]</scope>
</reference>
<accession>Q1LST1</accession>